<accession>A6VUT6</accession>
<sequence>MEPFVSRIYFGDLLAGTDEAGRGPLAGEVVAAAVILDPAQPITGLADSKKLSEKKREALFVEIQEKALAYGIARATIEEIDELNILHASMLAMSRAVALLSIEPEYVLVDGNRIPPNLPCSAEAVVKGDARHAAISAASILAKVTRDRDIVQVAQIYPEYGFEKHKGYPTALHLEAIRLHGITPIHRRSFGPVKKILEG</sequence>
<evidence type="ECO:0000255" key="1">
    <source>
        <dbReference type="HAMAP-Rule" id="MF_00052"/>
    </source>
</evidence>
<evidence type="ECO:0000255" key="2">
    <source>
        <dbReference type="PROSITE-ProRule" id="PRU01319"/>
    </source>
</evidence>
<name>RNH2_MARMS</name>
<proteinExistence type="inferred from homology"/>
<feature type="chain" id="PRO_0000334918" description="Ribonuclease HII">
    <location>
        <begin position="1"/>
        <end position="199"/>
    </location>
</feature>
<feature type="domain" description="RNase H type-2" evidence="2">
    <location>
        <begin position="12"/>
        <end position="199"/>
    </location>
</feature>
<feature type="binding site" evidence="1">
    <location>
        <position position="18"/>
    </location>
    <ligand>
        <name>a divalent metal cation</name>
        <dbReference type="ChEBI" id="CHEBI:60240"/>
    </ligand>
</feature>
<feature type="binding site" evidence="1">
    <location>
        <position position="19"/>
    </location>
    <ligand>
        <name>a divalent metal cation</name>
        <dbReference type="ChEBI" id="CHEBI:60240"/>
    </ligand>
</feature>
<feature type="binding site" evidence="1">
    <location>
        <position position="110"/>
    </location>
    <ligand>
        <name>a divalent metal cation</name>
        <dbReference type="ChEBI" id="CHEBI:60240"/>
    </ligand>
</feature>
<keyword id="KW-0963">Cytoplasm</keyword>
<keyword id="KW-0255">Endonuclease</keyword>
<keyword id="KW-0378">Hydrolase</keyword>
<keyword id="KW-0464">Manganese</keyword>
<keyword id="KW-0479">Metal-binding</keyword>
<keyword id="KW-0540">Nuclease</keyword>
<dbReference type="EC" id="3.1.26.4" evidence="1"/>
<dbReference type="EMBL" id="CP000749">
    <property type="protein sequence ID" value="ABR70215.1"/>
    <property type="molecule type" value="Genomic_DNA"/>
</dbReference>
<dbReference type="SMR" id="A6VUT6"/>
<dbReference type="STRING" id="400668.Mmwyl1_1286"/>
<dbReference type="KEGG" id="mmw:Mmwyl1_1286"/>
<dbReference type="eggNOG" id="COG0164">
    <property type="taxonomic scope" value="Bacteria"/>
</dbReference>
<dbReference type="HOGENOM" id="CLU_036532_3_2_6"/>
<dbReference type="OrthoDB" id="9803420at2"/>
<dbReference type="GO" id="GO:0005737">
    <property type="term" value="C:cytoplasm"/>
    <property type="evidence" value="ECO:0007669"/>
    <property type="project" value="UniProtKB-SubCell"/>
</dbReference>
<dbReference type="GO" id="GO:0032299">
    <property type="term" value="C:ribonuclease H2 complex"/>
    <property type="evidence" value="ECO:0007669"/>
    <property type="project" value="TreeGrafter"/>
</dbReference>
<dbReference type="GO" id="GO:0030145">
    <property type="term" value="F:manganese ion binding"/>
    <property type="evidence" value="ECO:0007669"/>
    <property type="project" value="UniProtKB-UniRule"/>
</dbReference>
<dbReference type="GO" id="GO:0003723">
    <property type="term" value="F:RNA binding"/>
    <property type="evidence" value="ECO:0007669"/>
    <property type="project" value="InterPro"/>
</dbReference>
<dbReference type="GO" id="GO:0004523">
    <property type="term" value="F:RNA-DNA hybrid ribonuclease activity"/>
    <property type="evidence" value="ECO:0007669"/>
    <property type="project" value="UniProtKB-UniRule"/>
</dbReference>
<dbReference type="GO" id="GO:0043137">
    <property type="term" value="P:DNA replication, removal of RNA primer"/>
    <property type="evidence" value="ECO:0007669"/>
    <property type="project" value="TreeGrafter"/>
</dbReference>
<dbReference type="GO" id="GO:0006298">
    <property type="term" value="P:mismatch repair"/>
    <property type="evidence" value="ECO:0007669"/>
    <property type="project" value="TreeGrafter"/>
</dbReference>
<dbReference type="CDD" id="cd07182">
    <property type="entry name" value="RNase_HII_bacteria_HII_like"/>
    <property type="match status" value="1"/>
</dbReference>
<dbReference type="FunFam" id="3.30.420.10:FF:000006">
    <property type="entry name" value="Ribonuclease HII"/>
    <property type="match status" value="1"/>
</dbReference>
<dbReference type="Gene3D" id="3.30.420.10">
    <property type="entry name" value="Ribonuclease H-like superfamily/Ribonuclease H"/>
    <property type="match status" value="1"/>
</dbReference>
<dbReference type="HAMAP" id="MF_00052_B">
    <property type="entry name" value="RNase_HII_B"/>
    <property type="match status" value="1"/>
</dbReference>
<dbReference type="InterPro" id="IPR022898">
    <property type="entry name" value="RNase_HII"/>
</dbReference>
<dbReference type="InterPro" id="IPR001352">
    <property type="entry name" value="RNase_HII/HIII"/>
</dbReference>
<dbReference type="InterPro" id="IPR024567">
    <property type="entry name" value="RNase_HII/HIII_dom"/>
</dbReference>
<dbReference type="InterPro" id="IPR012337">
    <property type="entry name" value="RNaseH-like_sf"/>
</dbReference>
<dbReference type="InterPro" id="IPR036397">
    <property type="entry name" value="RNaseH_sf"/>
</dbReference>
<dbReference type="NCBIfam" id="NF000594">
    <property type="entry name" value="PRK00015.1-1"/>
    <property type="match status" value="1"/>
</dbReference>
<dbReference type="NCBIfam" id="NF000595">
    <property type="entry name" value="PRK00015.1-3"/>
    <property type="match status" value="1"/>
</dbReference>
<dbReference type="NCBIfam" id="NF000596">
    <property type="entry name" value="PRK00015.1-4"/>
    <property type="match status" value="1"/>
</dbReference>
<dbReference type="PANTHER" id="PTHR10954">
    <property type="entry name" value="RIBONUCLEASE H2 SUBUNIT A"/>
    <property type="match status" value="1"/>
</dbReference>
<dbReference type="PANTHER" id="PTHR10954:SF18">
    <property type="entry name" value="RIBONUCLEASE HII"/>
    <property type="match status" value="1"/>
</dbReference>
<dbReference type="Pfam" id="PF01351">
    <property type="entry name" value="RNase_HII"/>
    <property type="match status" value="1"/>
</dbReference>
<dbReference type="SUPFAM" id="SSF53098">
    <property type="entry name" value="Ribonuclease H-like"/>
    <property type="match status" value="1"/>
</dbReference>
<dbReference type="PROSITE" id="PS51975">
    <property type="entry name" value="RNASE_H_2"/>
    <property type="match status" value="1"/>
</dbReference>
<organism>
    <name type="scientific">Marinomonas sp. (strain MWYL1)</name>
    <dbReference type="NCBI Taxonomy" id="400668"/>
    <lineage>
        <taxon>Bacteria</taxon>
        <taxon>Pseudomonadati</taxon>
        <taxon>Pseudomonadota</taxon>
        <taxon>Gammaproteobacteria</taxon>
        <taxon>Oceanospirillales</taxon>
        <taxon>Oceanospirillaceae</taxon>
        <taxon>Marinomonas</taxon>
    </lineage>
</organism>
<protein>
    <recommendedName>
        <fullName evidence="1">Ribonuclease HII</fullName>
        <shortName evidence="1">RNase HII</shortName>
        <ecNumber evidence="1">3.1.26.4</ecNumber>
    </recommendedName>
</protein>
<gene>
    <name evidence="1" type="primary">rnhB</name>
    <name type="ordered locus">Mmwyl1_1286</name>
</gene>
<comment type="function">
    <text evidence="1">Endonuclease that specifically degrades the RNA of RNA-DNA hybrids.</text>
</comment>
<comment type="catalytic activity">
    <reaction evidence="1">
        <text>Endonucleolytic cleavage to 5'-phosphomonoester.</text>
        <dbReference type="EC" id="3.1.26.4"/>
    </reaction>
</comment>
<comment type="cofactor">
    <cofactor evidence="1">
        <name>Mn(2+)</name>
        <dbReference type="ChEBI" id="CHEBI:29035"/>
    </cofactor>
    <cofactor evidence="1">
        <name>Mg(2+)</name>
        <dbReference type="ChEBI" id="CHEBI:18420"/>
    </cofactor>
    <text evidence="1">Manganese or magnesium. Binds 1 divalent metal ion per monomer in the absence of substrate. May bind a second metal ion after substrate binding.</text>
</comment>
<comment type="subcellular location">
    <subcellularLocation>
        <location evidence="1">Cytoplasm</location>
    </subcellularLocation>
</comment>
<comment type="similarity">
    <text evidence="1">Belongs to the RNase HII family.</text>
</comment>
<reference key="1">
    <citation type="submission" date="2007-06" db="EMBL/GenBank/DDBJ databases">
        <title>Complete sequence of Marinomonas sp. MWYL1.</title>
        <authorList>
            <consortium name="US DOE Joint Genome Institute"/>
            <person name="Copeland A."/>
            <person name="Lucas S."/>
            <person name="Lapidus A."/>
            <person name="Barry K."/>
            <person name="Glavina del Rio T."/>
            <person name="Dalin E."/>
            <person name="Tice H."/>
            <person name="Pitluck S."/>
            <person name="Kiss H."/>
            <person name="Brettin T."/>
            <person name="Bruce D."/>
            <person name="Detter J.C."/>
            <person name="Han C."/>
            <person name="Schmutz J."/>
            <person name="Larimer F."/>
            <person name="Land M."/>
            <person name="Hauser L."/>
            <person name="Kyrpides N."/>
            <person name="Kim E."/>
            <person name="Johnston A.W.B."/>
            <person name="Todd J.D."/>
            <person name="Rogers R."/>
            <person name="Wexler M."/>
            <person name="Bond P.L."/>
            <person name="Li Y."/>
            <person name="Richardson P."/>
        </authorList>
    </citation>
    <scope>NUCLEOTIDE SEQUENCE [LARGE SCALE GENOMIC DNA]</scope>
    <source>
        <strain>MWYL1</strain>
    </source>
</reference>